<protein>
    <recommendedName>
        <fullName>T-complex protein 1 subunit gamma</fullName>
        <shortName>TCP-1-gamma</shortName>
    </recommendedName>
    <alternativeName>
        <fullName>CCT-gamma</fullName>
    </alternativeName>
</protein>
<keyword id="KW-0067">ATP-binding</keyword>
<keyword id="KW-0143">Chaperone</keyword>
<keyword id="KW-0963">Cytoplasm</keyword>
<keyword id="KW-1015">Disulfide bond</keyword>
<keyword id="KW-0547">Nucleotide-binding</keyword>
<keyword id="KW-0597">Phosphoprotein</keyword>
<keyword id="KW-1185">Reference proteome</keyword>
<accession>O74341</accession>
<organism>
    <name type="scientific">Schizosaccharomyces pombe (strain 972 / ATCC 24843)</name>
    <name type="common">Fission yeast</name>
    <dbReference type="NCBI Taxonomy" id="284812"/>
    <lineage>
        <taxon>Eukaryota</taxon>
        <taxon>Fungi</taxon>
        <taxon>Dikarya</taxon>
        <taxon>Ascomycota</taxon>
        <taxon>Taphrinomycotina</taxon>
        <taxon>Schizosaccharomycetes</taxon>
        <taxon>Schizosaccharomycetales</taxon>
        <taxon>Schizosaccharomycetaceae</taxon>
        <taxon>Schizosaccharomyces</taxon>
    </lineage>
</organism>
<reference key="1">
    <citation type="journal article" date="2002" name="Nature">
        <title>The genome sequence of Schizosaccharomyces pombe.</title>
        <authorList>
            <person name="Wood V."/>
            <person name="Gwilliam R."/>
            <person name="Rajandream M.A."/>
            <person name="Lyne M.H."/>
            <person name="Lyne R."/>
            <person name="Stewart A."/>
            <person name="Sgouros J.G."/>
            <person name="Peat N."/>
            <person name="Hayles J."/>
            <person name="Baker S.G."/>
            <person name="Basham D."/>
            <person name="Bowman S."/>
            <person name="Brooks K."/>
            <person name="Brown D."/>
            <person name="Brown S."/>
            <person name="Chillingworth T."/>
            <person name="Churcher C.M."/>
            <person name="Collins M."/>
            <person name="Connor R."/>
            <person name="Cronin A."/>
            <person name="Davis P."/>
            <person name="Feltwell T."/>
            <person name="Fraser A."/>
            <person name="Gentles S."/>
            <person name="Goble A."/>
            <person name="Hamlin N."/>
            <person name="Harris D.E."/>
            <person name="Hidalgo J."/>
            <person name="Hodgson G."/>
            <person name="Holroyd S."/>
            <person name="Hornsby T."/>
            <person name="Howarth S."/>
            <person name="Huckle E.J."/>
            <person name="Hunt S."/>
            <person name="Jagels K."/>
            <person name="James K.D."/>
            <person name="Jones L."/>
            <person name="Jones M."/>
            <person name="Leather S."/>
            <person name="McDonald S."/>
            <person name="McLean J."/>
            <person name="Mooney P."/>
            <person name="Moule S."/>
            <person name="Mungall K.L."/>
            <person name="Murphy L.D."/>
            <person name="Niblett D."/>
            <person name="Odell C."/>
            <person name="Oliver K."/>
            <person name="O'Neil S."/>
            <person name="Pearson D."/>
            <person name="Quail M.A."/>
            <person name="Rabbinowitsch E."/>
            <person name="Rutherford K.M."/>
            <person name="Rutter S."/>
            <person name="Saunders D."/>
            <person name="Seeger K."/>
            <person name="Sharp S."/>
            <person name="Skelton J."/>
            <person name="Simmonds M.N."/>
            <person name="Squares R."/>
            <person name="Squares S."/>
            <person name="Stevens K."/>
            <person name="Taylor K."/>
            <person name="Taylor R.G."/>
            <person name="Tivey A."/>
            <person name="Walsh S.V."/>
            <person name="Warren T."/>
            <person name="Whitehead S."/>
            <person name="Woodward J.R."/>
            <person name="Volckaert G."/>
            <person name="Aert R."/>
            <person name="Robben J."/>
            <person name="Grymonprez B."/>
            <person name="Weltjens I."/>
            <person name="Vanstreels E."/>
            <person name="Rieger M."/>
            <person name="Schaefer M."/>
            <person name="Mueller-Auer S."/>
            <person name="Gabel C."/>
            <person name="Fuchs M."/>
            <person name="Duesterhoeft A."/>
            <person name="Fritzc C."/>
            <person name="Holzer E."/>
            <person name="Moestl D."/>
            <person name="Hilbert H."/>
            <person name="Borzym K."/>
            <person name="Langer I."/>
            <person name="Beck A."/>
            <person name="Lehrach H."/>
            <person name="Reinhardt R."/>
            <person name="Pohl T.M."/>
            <person name="Eger P."/>
            <person name="Zimmermann W."/>
            <person name="Wedler H."/>
            <person name="Wambutt R."/>
            <person name="Purnelle B."/>
            <person name="Goffeau A."/>
            <person name="Cadieu E."/>
            <person name="Dreano S."/>
            <person name="Gloux S."/>
            <person name="Lelaure V."/>
            <person name="Mottier S."/>
            <person name="Galibert F."/>
            <person name="Aves S.J."/>
            <person name="Xiang Z."/>
            <person name="Hunt C."/>
            <person name="Moore K."/>
            <person name="Hurst S.M."/>
            <person name="Lucas M."/>
            <person name="Rochet M."/>
            <person name="Gaillardin C."/>
            <person name="Tallada V.A."/>
            <person name="Garzon A."/>
            <person name="Thode G."/>
            <person name="Daga R.R."/>
            <person name="Cruzado L."/>
            <person name="Jimenez J."/>
            <person name="Sanchez M."/>
            <person name="del Rey F."/>
            <person name="Benito J."/>
            <person name="Dominguez A."/>
            <person name="Revuelta J.L."/>
            <person name="Moreno S."/>
            <person name="Armstrong J."/>
            <person name="Forsburg S.L."/>
            <person name="Cerutti L."/>
            <person name="Lowe T."/>
            <person name="McCombie W.R."/>
            <person name="Paulsen I."/>
            <person name="Potashkin J."/>
            <person name="Shpakovski G.V."/>
            <person name="Ussery D."/>
            <person name="Barrell B.G."/>
            <person name="Nurse P."/>
        </authorList>
    </citation>
    <scope>NUCLEOTIDE SEQUENCE [LARGE SCALE GENOMIC DNA]</scope>
    <source>
        <strain>972 / ATCC 24843</strain>
    </source>
</reference>
<reference key="2">
    <citation type="journal article" date="2008" name="J. Proteome Res.">
        <title>Phosphoproteome analysis of fission yeast.</title>
        <authorList>
            <person name="Wilson-Grady J.T."/>
            <person name="Villen J."/>
            <person name="Gygi S.P."/>
        </authorList>
    </citation>
    <scope>PHOSPHORYLATION [LARGE SCALE ANALYSIS] AT SER-250</scope>
    <scope>IDENTIFICATION BY MASS SPECTROMETRY</scope>
</reference>
<dbReference type="EMBL" id="CU329671">
    <property type="protein sequence ID" value="CAA20112.1"/>
    <property type="molecule type" value="Genomic_DNA"/>
</dbReference>
<dbReference type="PIR" id="T39856">
    <property type="entry name" value="T39856"/>
</dbReference>
<dbReference type="RefSeq" id="NP_595810.1">
    <property type="nucleotide sequence ID" value="NM_001021713.2"/>
</dbReference>
<dbReference type="SMR" id="O74341"/>
<dbReference type="BioGRID" id="277094">
    <property type="interactions" value="10"/>
</dbReference>
<dbReference type="FunCoup" id="O74341">
    <property type="interactions" value="783"/>
</dbReference>
<dbReference type="IntAct" id="O74341">
    <property type="interactions" value="1"/>
</dbReference>
<dbReference type="STRING" id="284812.O74341"/>
<dbReference type="iPTMnet" id="O74341"/>
<dbReference type="PaxDb" id="4896-SPBC1A4.08c.1"/>
<dbReference type="EnsemblFungi" id="SPBC1A4.08c.1">
    <property type="protein sequence ID" value="SPBC1A4.08c.1:pep"/>
    <property type="gene ID" value="SPBC1A4.08c"/>
</dbReference>
<dbReference type="GeneID" id="2540567"/>
<dbReference type="KEGG" id="spo:2540567"/>
<dbReference type="PomBase" id="SPBC1A4.08c">
    <property type="gene designation" value="cct3"/>
</dbReference>
<dbReference type="VEuPathDB" id="FungiDB:SPBC1A4.08c"/>
<dbReference type="eggNOG" id="KOG0364">
    <property type="taxonomic scope" value="Eukaryota"/>
</dbReference>
<dbReference type="HOGENOM" id="CLU_008891_7_3_1"/>
<dbReference type="InParanoid" id="O74341"/>
<dbReference type="OMA" id="CGGSTIR"/>
<dbReference type="PhylomeDB" id="O74341"/>
<dbReference type="Reactome" id="R-SPO-390471">
    <property type="pathway name" value="Association of TriC/CCT with target proteins during biosynthesis"/>
</dbReference>
<dbReference type="Reactome" id="R-SPO-6814122">
    <property type="pathway name" value="Cooperation of PDCL (PhLP1) and TRiC/CCT in G-protein beta folding"/>
</dbReference>
<dbReference type="PRO" id="PR:O74341"/>
<dbReference type="Proteomes" id="UP000002485">
    <property type="component" value="Chromosome II"/>
</dbReference>
<dbReference type="GO" id="GO:0005832">
    <property type="term" value="C:chaperonin-containing T-complex"/>
    <property type="evidence" value="ECO:0000314"/>
    <property type="project" value="PomBase"/>
</dbReference>
<dbReference type="GO" id="GO:0005856">
    <property type="term" value="C:cytoskeleton"/>
    <property type="evidence" value="ECO:0000266"/>
    <property type="project" value="PomBase"/>
</dbReference>
<dbReference type="GO" id="GO:0005829">
    <property type="term" value="C:cytosol"/>
    <property type="evidence" value="ECO:0007005"/>
    <property type="project" value="PomBase"/>
</dbReference>
<dbReference type="GO" id="GO:0005634">
    <property type="term" value="C:nucleus"/>
    <property type="evidence" value="ECO:0007005"/>
    <property type="project" value="PomBase"/>
</dbReference>
<dbReference type="GO" id="GO:0005524">
    <property type="term" value="F:ATP binding"/>
    <property type="evidence" value="ECO:0007669"/>
    <property type="project" value="UniProtKB-KW"/>
</dbReference>
<dbReference type="GO" id="GO:0016887">
    <property type="term" value="F:ATP hydrolysis activity"/>
    <property type="evidence" value="ECO:0007669"/>
    <property type="project" value="InterPro"/>
</dbReference>
<dbReference type="GO" id="GO:0140662">
    <property type="term" value="F:ATP-dependent protein folding chaperone"/>
    <property type="evidence" value="ECO:0007669"/>
    <property type="project" value="InterPro"/>
</dbReference>
<dbReference type="GO" id="GO:0051082">
    <property type="term" value="F:unfolded protein binding"/>
    <property type="evidence" value="ECO:0000318"/>
    <property type="project" value="GO_Central"/>
</dbReference>
<dbReference type="GO" id="GO:0006457">
    <property type="term" value="P:protein folding"/>
    <property type="evidence" value="ECO:0000318"/>
    <property type="project" value="GO_Central"/>
</dbReference>
<dbReference type="CDD" id="cd03337">
    <property type="entry name" value="TCP1_gamma"/>
    <property type="match status" value="1"/>
</dbReference>
<dbReference type="FunFam" id="1.10.560.10:FF:000085">
    <property type="entry name" value="T-complex protein 1 subunit gamma"/>
    <property type="match status" value="1"/>
</dbReference>
<dbReference type="FunFam" id="3.50.7.10:FF:000005">
    <property type="entry name" value="T-complex protein 1 subunit gamma"/>
    <property type="match status" value="1"/>
</dbReference>
<dbReference type="Gene3D" id="3.50.7.10">
    <property type="entry name" value="GroEL"/>
    <property type="match status" value="1"/>
</dbReference>
<dbReference type="Gene3D" id="1.10.560.10">
    <property type="entry name" value="GroEL-like equatorial domain"/>
    <property type="match status" value="1"/>
</dbReference>
<dbReference type="Gene3D" id="3.30.260.10">
    <property type="entry name" value="TCP-1-like chaperonin intermediate domain"/>
    <property type="match status" value="1"/>
</dbReference>
<dbReference type="InterPro" id="IPR012719">
    <property type="entry name" value="Chap_CCT_gamma"/>
</dbReference>
<dbReference type="InterPro" id="IPR017998">
    <property type="entry name" value="Chaperone_TCP-1"/>
</dbReference>
<dbReference type="InterPro" id="IPR002194">
    <property type="entry name" value="Chaperonin_TCP-1_CS"/>
</dbReference>
<dbReference type="InterPro" id="IPR002423">
    <property type="entry name" value="Cpn60/GroEL/TCP-1"/>
</dbReference>
<dbReference type="InterPro" id="IPR027409">
    <property type="entry name" value="GroEL-like_apical_dom_sf"/>
</dbReference>
<dbReference type="InterPro" id="IPR027413">
    <property type="entry name" value="GROEL-like_equatorial_sf"/>
</dbReference>
<dbReference type="InterPro" id="IPR027410">
    <property type="entry name" value="TCP-1-like_intermed_sf"/>
</dbReference>
<dbReference type="InterPro" id="IPR053374">
    <property type="entry name" value="TCP-1_chaperonin"/>
</dbReference>
<dbReference type="InterPro" id="IPR054827">
    <property type="entry name" value="thermosome_alpha"/>
</dbReference>
<dbReference type="NCBIfam" id="TIGR02344">
    <property type="entry name" value="chap_CCT_gamma"/>
    <property type="match status" value="1"/>
</dbReference>
<dbReference type="NCBIfam" id="NF041082">
    <property type="entry name" value="thermosome_alpha"/>
    <property type="match status" value="1"/>
</dbReference>
<dbReference type="NCBIfam" id="NF041083">
    <property type="entry name" value="thermosome_beta"/>
    <property type="match status" value="1"/>
</dbReference>
<dbReference type="PANTHER" id="PTHR11353">
    <property type="entry name" value="CHAPERONIN"/>
    <property type="match status" value="1"/>
</dbReference>
<dbReference type="Pfam" id="PF00118">
    <property type="entry name" value="Cpn60_TCP1"/>
    <property type="match status" value="1"/>
</dbReference>
<dbReference type="PRINTS" id="PR00304">
    <property type="entry name" value="TCOMPLEXTCP1"/>
</dbReference>
<dbReference type="SUPFAM" id="SSF52029">
    <property type="entry name" value="GroEL apical domain-like"/>
    <property type="match status" value="1"/>
</dbReference>
<dbReference type="SUPFAM" id="SSF48592">
    <property type="entry name" value="GroEL equatorial domain-like"/>
    <property type="match status" value="1"/>
</dbReference>
<dbReference type="SUPFAM" id="SSF54849">
    <property type="entry name" value="GroEL-intermediate domain like"/>
    <property type="match status" value="1"/>
</dbReference>
<dbReference type="PROSITE" id="PS00750">
    <property type="entry name" value="TCP1_1"/>
    <property type="match status" value="1"/>
</dbReference>
<dbReference type="PROSITE" id="PS00751">
    <property type="entry name" value="TCP1_2"/>
    <property type="match status" value="1"/>
</dbReference>
<dbReference type="PROSITE" id="PS00995">
    <property type="entry name" value="TCP1_3"/>
    <property type="match status" value="1"/>
</dbReference>
<proteinExistence type="evidence at protein level"/>
<name>TCPG_SCHPO</name>
<feature type="chain" id="PRO_0000128330" description="T-complex protein 1 subunit gamma">
    <location>
        <begin position="1"/>
        <end position="528"/>
    </location>
</feature>
<feature type="modified residue" description="Phosphoserine" evidence="2">
    <location>
        <position position="250"/>
    </location>
</feature>
<feature type="disulfide bond" evidence="1">
    <location>
        <begin position="364"/>
        <end position="370"/>
    </location>
</feature>
<evidence type="ECO:0000250" key="1"/>
<evidence type="ECO:0000269" key="2">
    <source>
    </source>
</evidence>
<evidence type="ECO:0000305" key="3"/>
<gene>
    <name type="primary">cct3</name>
    <name type="ORF">SPBC1A4.08c</name>
</gene>
<comment type="function">
    <text evidence="1">Molecular chaperone; assists the folding of proteins upon ATP hydrolysis. Known to play a role, in vitro, in the folding of actin and tubulin (By similarity).</text>
</comment>
<comment type="subunit">
    <text evidence="3">Heterooligomeric complex of about 850 to 900 kDa that forms two stacked rings, 12 to 16 nm in diameter.</text>
</comment>
<comment type="subcellular location">
    <subcellularLocation>
        <location evidence="3">Cytoplasm</location>
    </subcellularLocation>
</comment>
<comment type="similarity">
    <text evidence="3">Belongs to the TCP-1 chaperonin family.</text>
</comment>
<sequence length="528" mass="58481">MQSPVFVMNTNGNRQVGHKAQMSNIQAAKAVADVIRTCLGPRAMLKMLLDPVGSVLLTNDGHAILREIEVAHPAAKSMIELARTQDEEVGDGTTSVIILAGEILAAASPLLDRKIHPVVMIRSFKQALEDALSIIDEITLPVNVDDNAEMFRLIRTCIGTKLVARWSDLMCHLALRAVRTVASTSNGRMEIDIKRYARVEKVPGGEIESSCVLDGVMLNKDVTHPKMRRRIENPRIVLLDCPLEYRKGESQTNIEISKDTDWNRILEIEEEQVKRMCDYIIAVKPDLVITEKGVSDLAQHYLLKANITALRRTRKSDNNRIARACGANIVNRLEDLREKDVGTGCGLFYIDKLGDEYYTFLTGCKNPKACTILLRGPSKDIINEVERNLQDAMAVARNVFFHPKLSPGGGATEMAVSVRLAEKARSIEGVAQWPYRAVADAIEIIPRTLVQNCGANPIKALTELRAKHAEGQHSFGIDGETGRVVDMHEYGVWEPEAVKLQSIKTAIESACLLLRVDDIVSGVRKHSE</sequence>